<keyword id="KW-0966">Cell projection</keyword>
<keyword id="KW-0969">Cilium</keyword>
<keyword id="KW-0963">Cytoplasm</keyword>
<keyword id="KW-1185">Reference proteome</keyword>
<evidence type="ECO:0000250" key="1"/>
<evidence type="ECO:0000269" key="2">
    <source>
    </source>
</evidence>
<evidence type="ECO:0000269" key="3">
    <source ref="2"/>
</evidence>
<evidence type="ECO:0000305" key="4"/>
<reference key="1">
    <citation type="journal article" date="2013" name="Nature">
        <title>The zebrafish reference genome sequence and its relationship to the human genome.</title>
        <authorList>
            <person name="Howe K."/>
            <person name="Clark M.D."/>
            <person name="Torroja C.F."/>
            <person name="Torrance J."/>
            <person name="Berthelot C."/>
            <person name="Muffato M."/>
            <person name="Collins J.E."/>
            <person name="Humphray S."/>
            <person name="McLaren K."/>
            <person name="Matthews L."/>
            <person name="McLaren S."/>
            <person name="Sealy I."/>
            <person name="Caccamo M."/>
            <person name="Churcher C."/>
            <person name="Scott C."/>
            <person name="Barrett J.C."/>
            <person name="Koch R."/>
            <person name="Rauch G.J."/>
            <person name="White S."/>
            <person name="Chow W."/>
            <person name="Kilian B."/>
            <person name="Quintais L.T."/>
            <person name="Guerra-Assuncao J.A."/>
            <person name="Zhou Y."/>
            <person name="Gu Y."/>
            <person name="Yen J."/>
            <person name="Vogel J.H."/>
            <person name="Eyre T."/>
            <person name="Redmond S."/>
            <person name="Banerjee R."/>
            <person name="Chi J."/>
            <person name="Fu B."/>
            <person name="Langley E."/>
            <person name="Maguire S.F."/>
            <person name="Laird G.K."/>
            <person name="Lloyd D."/>
            <person name="Kenyon E."/>
            <person name="Donaldson S."/>
            <person name="Sehra H."/>
            <person name="Almeida-King J."/>
            <person name="Loveland J."/>
            <person name="Trevanion S."/>
            <person name="Jones M."/>
            <person name="Quail M."/>
            <person name="Willey D."/>
            <person name="Hunt A."/>
            <person name="Burton J."/>
            <person name="Sims S."/>
            <person name="McLay K."/>
            <person name="Plumb B."/>
            <person name="Davis J."/>
            <person name="Clee C."/>
            <person name="Oliver K."/>
            <person name="Clark R."/>
            <person name="Riddle C."/>
            <person name="Elliot D."/>
            <person name="Threadgold G."/>
            <person name="Harden G."/>
            <person name="Ware D."/>
            <person name="Begum S."/>
            <person name="Mortimore B."/>
            <person name="Kerry G."/>
            <person name="Heath P."/>
            <person name="Phillimore B."/>
            <person name="Tracey A."/>
            <person name="Corby N."/>
            <person name="Dunn M."/>
            <person name="Johnson C."/>
            <person name="Wood J."/>
            <person name="Clark S."/>
            <person name="Pelan S."/>
            <person name="Griffiths G."/>
            <person name="Smith M."/>
            <person name="Glithero R."/>
            <person name="Howden P."/>
            <person name="Barker N."/>
            <person name="Lloyd C."/>
            <person name="Stevens C."/>
            <person name="Harley J."/>
            <person name="Holt K."/>
            <person name="Panagiotidis G."/>
            <person name="Lovell J."/>
            <person name="Beasley H."/>
            <person name="Henderson C."/>
            <person name="Gordon D."/>
            <person name="Auger K."/>
            <person name="Wright D."/>
            <person name="Collins J."/>
            <person name="Raisen C."/>
            <person name="Dyer L."/>
            <person name="Leung K."/>
            <person name="Robertson L."/>
            <person name="Ambridge K."/>
            <person name="Leongamornlert D."/>
            <person name="McGuire S."/>
            <person name="Gilderthorp R."/>
            <person name="Griffiths C."/>
            <person name="Manthravadi D."/>
            <person name="Nichol S."/>
            <person name="Barker G."/>
            <person name="Whitehead S."/>
            <person name="Kay M."/>
            <person name="Brown J."/>
            <person name="Murnane C."/>
            <person name="Gray E."/>
            <person name="Humphries M."/>
            <person name="Sycamore N."/>
            <person name="Barker D."/>
            <person name="Saunders D."/>
            <person name="Wallis J."/>
            <person name="Babbage A."/>
            <person name="Hammond S."/>
            <person name="Mashreghi-Mohammadi M."/>
            <person name="Barr L."/>
            <person name="Martin S."/>
            <person name="Wray P."/>
            <person name="Ellington A."/>
            <person name="Matthews N."/>
            <person name="Ellwood M."/>
            <person name="Woodmansey R."/>
            <person name="Clark G."/>
            <person name="Cooper J."/>
            <person name="Tromans A."/>
            <person name="Grafham D."/>
            <person name="Skuce C."/>
            <person name="Pandian R."/>
            <person name="Andrews R."/>
            <person name="Harrison E."/>
            <person name="Kimberley A."/>
            <person name="Garnett J."/>
            <person name="Fosker N."/>
            <person name="Hall R."/>
            <person name="Garner P."/>
            <person name="Kelly D."/>
            <person name="Bird C."/>
            <person name="Palmer S."/>
            <person name="Gehring I."/>
            <person name="Berger A."/>
            <person name="Dooley C.M."/>
            <person name="Ersan-Urun Z."/>
            <person name="Eser C."/>
            <person name="Geiger H."/>
            <person name="Geisler M."/>
            <person name="Karotki L."/>
            <person name="Kirn A."/>
            <person name="Konantz J."/>
            <person name="Konantz M."/>
            <person name="Oberlander M."/>
            <person name="Rudolph-Geiger S."/>
            <person name="Teucke M."/>
            <person name="Lanz C."/>
            <person name="Raddatz G."/>
            <person name="Osoegawa K."/>
            <person name="Zhu B."/>
            <person name="Rapp A."/>
            <person name="Widaa S."/>
            <person name="Langford C."/>
            <person name="Yang F."/>
            <person name="Schuster S.C."/>
            <person name="Carter N.P."/>
            <person name="Harrow J."/>
            <person name="Ning Z."/>
            <person name="Herrero J."/>
            <person name="Searle S.M."/>
            <person name="Enright A."/>
            <person name="Geisler R."/>
            <person name="Plasterk R.H."/>
            <person name="Lee C."/>
            <person name="Westerfield M."/>
            <person name="de Jong P.J."/>
            <person name="Zon L.I."/>
            <person name="Postlethwait J.H."/>
            <person name="Nusslein-Volhard C."/>
            <person name="Hubbard T.J."/>
            <person name="Roest Crollius H."/>
            <person name="Rogers J."/>
            <person name="Stemple D.L."/>
        </authorList>
    </citation>
    <scope>NUCLEOTIDE SEQUENCE [LARGE SCALE GENOMIC DNA]</scope>
    <source>
        <strain>Tuebingen</strain>
    </source>
</reference>
<reference key="2">
    <citation type="journal article" date="2008" name="Dev. Cell">
        <title>A BBSome subunit links ciliogenesis, microtubule stability and acetylation.</title>
        <authorList>
            <person name="Loktev A.V."/>
            <person name="Zhang Q."/>
            <person name="Beck J.S."/>
            <person name="Searby C.C."/>
            <person name="Scheetz T.E."/>
            <person name="Bazan F."/>
            <person name="Slusarski D.C."/>
            <person name="Sheffield V.C."/>
            <person name="Jackson P.K."/>
            <person name="Nachury M.V."/>
        </authorList>
    </citation>
    <scope>FUNCTION</scope>
    <scope>DISRUPTION PHENOTYPE</scope>
</reference>
<reference key="3">
    <citation type="journal article" date="2014" name="J. Med. Genet.">
        <title>Exome sequencing of Bardet-Biedl syndrome patient identifies a null mutation in the BBSome subunit BBIP1 (BBS18).</title>
        <authorList>
            <person name="Scheidecker S."/>
            <person name="Etard C."/>
            <person name="Pierce N.W."/>
            <person name="Geoffroy V."/>
            <person name="Schaefer E."/>
            <person name="Muller J."/>
            <person name="Chennen K."/>
            <person name="Flori E."/>
            <person name="Pelletier V."/>
            <person name="Poch O."/>
            <person name="Marion V."/>
            <person name="Stoetzel C."/>
            <person name="Straehle U."/>
            <person name="Nachury M.V."/>
            <person name="Dollfus H."/>
        </authorList>
    </citation>
    <scope>DISRUPTION PHENOTYPE</scope>
</reference>
<accession>Q1L8Y6</accession>
<comment type="function">
    <text evidence="3">Required for primary cilia assembly.</text>
</comment>
<comment type="subcellular location">
    <subcellularLocation>
        <location evidence="1">Cell projection</location>
        <location evidence="1">Cilium</location>
    </subcellularLocation>
    <subcellularLocation>
        <location evidence="1">Cytoplasm</location>
    </subcellularLocation>
</comment>
<comment type="disruption phenotype">
    <text evidence="2 3">Embryos display defective melanosome transport and disruption of the ciliated Kupffer's vesicle phenotypes. BBIP1 morpholino knockdown results in bilateral cystic dilations of the pronephros. Pronephric cilia of morphants are abnormally short and fail to maintain a parallel orientation to the anteroposterior axis of the duct. Morphants also show increased frequency of situs inversus compared to wild-type and abnormal retinal development.</text>
</comment>
<comment type="miscellaneous">
    <text>BBIP10 interacts genetically with BBS1.</text>
</comment>
<comment type="similarity">
    <text evidence="4">Belongs to the BBIP10 family.</text>
</comment>
<dbReference type="EMBL" id="BX005362">
    <property type="protein sequence ID" value="CAK04186.1"/>
    <property type="molecule type" value="Genomic_DNA"/>
</dbReference>
<dbReference type="EMBL" id="CR450802">
    <property type="protein sequence ID" value="CAK04355.1"/>
    <property type="molecule type" value="Genomic_DNA"/>
</dbReference>
<dbReference type="RefSeq" id="NP_001159595.1">
    <property type="nucleotide sequence ID" value="NM_001166123.1"/>
</dbReference>
<dbReference type="SMR" id="Q1L8Y6"/>
<dbReference type="BioGRID" id="660587">
    <property type="interactions" value="3"/>
</dbReference>
<dbReference type="FunCoup" id="Q1L8Y6">
    <property type="interactions" value="80"/>
</dbReference>
<dbReference type="STRING" id="7955.ENSDARP00000118928"/>
<dbReference type="PaxDb" id="7955-ENSDARP00000118928"/>
<dbReference type="Ensembl" id="ENSDART00000146280">
    <property type="protein sequence ID" value="ENSDARP00000118928"/>
    <property type="gene ID" value="ENSDARG00000071046"/>
</dbReference>
<dbReference type="Ensembl" id="ENSDART00000180212">
    <property type="protein sequence ID" value="ENSDARP00000150533"/>
    <property type="gene ID" value="ENSDARG00000112897"/>
</dbReference>
<dbReference type="Ensembl" id="ENSDART00000186137">
    <property type="protein sequence ID" value="ENSDARP00000150470"/>
    <property type="gene ID" value="ENSDARG00000116522"/>
</dbReference>
<dbReference type="GeneID" id="795943"/>
<dbReference type="KEGG" id="dre:795943"/>
<dbReference type="AGR" id="ZFIN:ZDB-GENE-050208-445"/>
<dbReference type="CTD" id="92482"/>
<dbReference type="ZFIN" id="ZDB-GENE-050208-445">
    <property type="gene designation" value="bbip1"/>
</dbReference>
<dbReference type="eggNOG" id="ENOG502S7YW">
    <property type="taxonomic scope" value="Eukaryota"/>
</dbReference>
<dbReference type="HOGENOM" id="CLU_185680_0_0_1"/>
<dbReference type="InParanoid" id="Q1L8Y6"/>
<dbReference type="OMA" id="QSERADC"/>
<dbReference type="OrthoDB" id="2154978at2759"/>
<dbReference type="PhylomeDB" id="Q1L8Y6"/>
<dbReference type="TreeFam" id="TF322869"/>
<dbReference type="PRO" id="PR:Q1L8Y6"/>
<dbReference type="Proteomes" id="UP000000437">
    <property type="component" value="Alternate scaffold 22"/>
</dbReference>
<dbReference type="Proteomes" id="UP000000437">
    <property type="component" value="Chromosome 22"/>
</dbReference>
<dbReference type="Bgee" id="ENSDARG00000071046">
    <property type="expression patterns" value="Expressed in testis and 21 other cell types or tissues"/>
</dbReference>
<dbReference type="GO" id="GO:0034464">
    <property type="term" value="C:BBSome"/>
    <property type="evidence" value="ECO:0000318"/>
    <property type="project" value="GO_Central"/>
</dbReference>
<dbReference type="GO" id="GO:0005737">
    <property type="term" value="C:cytoplasm"/>
    <property type="evidence" value="ECO:0007669"/>
    <property type="project" value="UniProtKB-SubCell"/>
</dbReference>
<dbReference type="GO" id="GO:0060271">
    <property type="term" value="P:cilium assembly"/>
    <property type="evidence" value="ECO:0007669"/>
    <property type="project" value="InterPro"/>
</dbReference>
<dbReference type="GO" id="GO:0070121">
    <property type="term" value="P:Kupffer's vesicle development"/>
    <property type="evidence" value="ECO:0000315"/>
    <property type="project" value="ZFIN"/>
</dbReference>
<dbReference type="GO" id="GO:0032402">
    <property type="term" value="P:melanosome transport"/>
    <property type="evidence" value="ECO:0000315"/>
    <property type="project" value="ZFIN"/>
</dbReference>
<dbReference type="GO" id="GO:0097500">
    <property type="term" value="P:receptor localization to non-motile cilium"/>
    <property type="evidence" value="ECO:0000318"/>
    <property type="project" value="GO_Central"/>
</dbReference>
<dbReference type="InterPro" id="IPR028233">
    <property type="entry name" value="BBIP10"/>
</dbReference>
<dbReference type="PANTHER" id="PTHR28596">
    <property type="entry name" value="BBSOME-INTERACTING PROTEIN 1"/>
    <property type="match status" value="1"/>
</dbReference>
<dbReference type="PANTHER" id="PTHR28596:SF1">
    <property type="entry name" value="BBSOME-INTERACTING PROTEIN 1"/>
    <property type="match status" value="1"/>
</dbReference>
<dbReference type="Pfam" id="PF14777">
    <property type="entry name" value="BBIP10"/>
    <property type="match status" value="1"/>
</dbReference>
<feature type="chain" id="PRO_0000342379" description="BBSome-interacting protein 1">
    <location>
        <begin position="1"/>
        <end position="72"/>
    </location>
</feature>
<protein>
    <recommendedName>
        <fullName>BBSome-interacting protein 1</fullName>
    </recommendedName>
    <alternativeName>
        <fullName>BBSome-interacting protein of 10 kDa</fullName>
    </alternativeName>
</protein>
<gene>
    <name type="primary">bbip1</name>
    <name type="synonym">bbip10</name>
    <name type="ORF">si:ch211-159c12.2</name>
    <name type="ORF">si:ch211-197i12.2</name>
</gene>
<name>BBIP1_DANRE</name>
<sequence length="72" mass="8291">MPEVKSMFREVLPKQGQLSMEDVPTMVLCKPKLLPLKSVTLEKLEKMQKDAQEIIRQQELALKEQPPSEKAE</sequence>
<proteinExistence type="inferred from homology"/>
<organism>
    <name type="scientific">Danio rerio</name>
    <name type="common">Zebrafish</name>
    <name type="synonym">Brachydanio rerio</name>
    <dbReference type="NCBI Taxonomy" id="7955"/>
    <lineage>
        <taxon>Eukaryota</taxon>
        <taxon>Metazoa</taxon>
        <taxon>Chordata</taxon>
        <taxon>Craniata</taxon>
        <taxon>Vertebrata</taxon>
        <taxon>Euteleostomi</taxon>
        <taxon>Actinopterygii</taxon>
        <taxon>Neopterygii</taxon>
        <taxon>Teleostei</taxon>
        <taxon>Ostariophysi</taxon>
        <taxon>Cypriniformes</taxon>
        <taxon>Danionidae</taxon>
        <taxon>Danioninae</taxon>
        <taxon>Danio</taxon>
    </lineage>
</organism>